<reference key="1">
    <citation type="journal article" date="2008" name="PLoS Genet.">
        <title>Complete genome sequence of the complex carbohydrate-degrading marine bacterium, Saccharophagus degradans strain 2-40 T.</title>
        <authorList>
            <person name="Weiner R.M."/>
            <person name="Taylor L.E. II"/>
            <person name="Henrissat B."/>
            <person name="Hauser L."/>
            <person name="Land M."/>
            <person name="Coutinho P.M."/>
            <person name="Rancurel C."/>
            <person name="Saunders E.H."/>
            <person name="Longmire A.G."/>
            <person name="Zhang H."/>
            <person name="Bayer E.A."/>
            <person name="Gilbert H.J."/>
            <person name="Larimer F."/>
            <person name="Zhulin I.B."/>
            <person name="Ekborg N.A."/>
            <person name="Lamed R."/>
            <person name="Richardson P.M."/>
            <person name="Borovok I."/>
            <person name="Hutcheson S."/>
        </authorList>
    </citation>
    <scope>NUCLEOTIDE SEQUENCE [LARGE SCALE GENOMIC DNA]</scope>
    <source>
        <strain>2-40 / ATCC 43961 / DSM 17024</strain>
    </source>
</reference>
<protein>
    <recommendedName>
        <fullName evidence="1">Large ribosomal subunit protein bL35</fullName>
    </recommendedName>
    <alternativeName>
        <fullName evidence="3">50S ribosomal protein L35</fullName>
    </alternativeName>
</protein>
<accession>Q21KD8</accession>
<comment type="similarity">
    <text evidence="1">Belongs to the bacterial ribosomal protein bL35 family.</text>
</comment>
<sequence>MSKAKTHSGAAKRFKKTASGYKHKHAFKSHILTKMTTKRKRQLRGTSLLNAADKPAVDRMLRAN</sequence>
<organism>
    <name type="scientific">Saccharophagus degradans (strain 2-40 / ATCC 43961 / DSM 17024)</name>
    <dbReference type="NCBI Taxonomy" id="203122"/>
    <lineage>
        <taxon>Bacteria</taxon>
        <taxon>Pseudomonadati</taxon>
        <taxon>Pseudomonadota</taxon>
        <taxon>Gammaproteobacteria</taxon>
        <taxon>Cellvibrionales</taxon>
        <taxon>Cellvibrionaceae</taxon>
        <taxon>Saccharophagus</taxon>
    </lineage>
</organism>
<feature type="chain" id="PRO_0000258747" description="Large ribosomal subunit protein bL35">
    <location>
        <begin position="1"/>
        <end position="64"/>
    </location>
</feature>
<feature type="region of interest" description="Disordered" evidence="2">
    <location>
        <begin position="1"/>
        <end position="51"/>
    </location>
</feature>
<feature type="compositionally biased region" description="Basic residues" evidence="2">
    <location>
        <begin position="1"/>
        <end position="28"/>
    </location>
</feature>
<gene>
    <name evidence="1" type="primary">rpmI</name>
    <name type="ordered locus">Sde_1579</name>
</gene>
<proteinExistence type="inferred from homology"/>
<keyword id="KW-1185">Reference proteome</keyword>
<keyword id="KW-0687">Ribonucleoprotein</keyword>
<keyword id="KW-0689">Ribosomal protein</keyword>
<dbReference type="EMBL" id="CP000282">
    <property type="protein sequence ID" value="ABD80841.1"/>
    <property type="molecule type" value="Genomic_DNA"/>
</dbReference>
<dbReference type="RefSeq" id="WP_011468061.1">
    <property type="nucleotide sequence ID" value="NC_007912.1"/>
</dbReference>
<dbReference type="SMR" id="Q21KD8"/>
<dbReference type="STRING" id="203122.Sde_1579"/>
<dbReference type="GeneID" id="98613255"/>
<dbReference type="KEGG" id="sde:Sde_1579"/>
<dbReference type="eggNOG" id="COG0291">
    <property type="taxonomic scope" value="Bacteria"/>
</dbReference>
<dbReference type="HOGENOM" id="CLU_169643_1_1_6"/>
<dbReference type="OrthoDB" id="47476at2"/>
<dbReference type="Proteomes" id="UP000001947">
    <property type="component" value="Chromosome"/>
</dbReference>
<dbReference type="GO" id="GO:0022625">
    <property type="term" value="C:cytosolic large ribosomal subunit"/>
    <property type="evidence" value="ECO:0007669"/>
    <property type="project" value="TreeGrafter"/>
</dbReference>
<dbReference type="GO" id="GO:0003735">
    <property type="term" value="F:structural constituent of ribosome"/>
    <property type="evidence" value="ECO:0007669"/>
    <property type="project" value="InterPro"/>
</dbReference>
<dbReference type="GO" id="GO:0006412">
    <property type="term" value="P:translation"/>
    <property type="evidence" value="ECO:0007669"/>
    <property type="project" value="UniProtKB-UniRule"/>
</dbReference>
<dbReference type="FunFam" id="4.10.410.60:FF:000001">
    <property type="entry name" value="50S ribosomal protein L35"/>
    <property type="match status" value="1"/>
</dbReference>
<dbReference type="Gene3D" id="4.10.410.60">
    <property type="match status" value="1"/>
</dbReference>
<dbReference type="HAMAP" id="MF_00514">
    <property type="entry name" value="Ribosomal_bL35"/>
    <property type="match status" value="1"/>
</dbReference>
<dbReference type="InterPro" id="IPR001706">
    <property type="entry name" value="Ribosomal_bL35"/>
</dbReference>
<dbReference type="InterPro" id="IPR021137">
    <property type="entry name" value="Ribosomal_bL35-like"/>
</dbReference>
<dbReference type="InterPro" id="IPR018265">
    <property type="entry name" value="Ribosomal_bL35_CS"/>
</dbReference>
<dbReference type="InterPro" id="IPR037229">
    <property type="entry name" value="Ribosomal_bL35_sf"/>
</dbReference>
<dbReference type="NCBIfam" id="TIGR00001">
    <property type="entry name" value="rpmI_bact"/>
    <property type="match status" value="1"/>
</dbReference>
<dbReference type="PANTHER" id="PTHR33343">
    <property type="entry name" value="54S RIBOSOMAL PROTEIN BL35M"/>
    <property type="match status" value="1"/>
</dbReference>
<dbReference type="PANTHER" id="PTHR33343:SF1">
    <property type="entry name" value="LARGE RIBOSOMAL SUBUNIT PROTEIN BL35M"/>
    <property type="match status" value="1"/>
</dbReference>
<dbReference type="Pfam" id="PF01632">
    <property type="entry name" value="Ribosomal_L35p"/>
    <property type="match status" value="1"/>
</dbReference>
<dbReference type="PRINTS" id="PR00064">
    <property type="entry name" value="RIBOSOMALL35"/>
</dbReference>
<dbReference type="SUPFAM" id="SSF143034">
    <property type="entry name" value="L35p-like"/>
    <property type="match status" value="1"/>
</dbReference>
<dbReference type="PROSITE" id="PS00936">
    <property type="entry name" value="RIBOSOMAL_L35"/>
    <property type="match status" value="1"/>
</dbReference>
<evidence type="ECO:0000255" key="1">
    <source>
        <dbReference type="HAMAP-Rule" id="MF_00514"/>
    </source>
</evidence>
<evidence type="ECO:0000256" key="2">
    <source>
        <dbReference type="SAM" id="MobiDB-lite"/>
    </source>
</evidence>
<evidence type="ECO:0000305" key="3"/>
<name>RL35_SACD2</name>